<dbReference type="EMBL" id="AAVQ01000001">
    <property type="protein sequence ID" value="EAZ63719.2"/>
    <property type="molecule type" value="Genomic_DNA"/>
</dbReference>
<dbReference type="RefSeq" id="XP_001387742.2">
    <property type="nucleotide sequence ID" value="XM_001387705.1"/>
</dbReference>
<dbReference type="SMR" id="A3GFA2"/>
<dbReference type="FunCoup" id="A3GFA2">
    <property type="interactions" value="1072"/>
</dbReference>
<dbReference type="STRING" id="322104.A3GFA2"/>
<dbReference type="GeneID" id="4850951"/>
<dbReference type="KEGG" id="pic:PICST_80516"/>
<dbReference type="eggNOG" id="KOG1986">
    <property type="taxonomic scope" value="Eukaryota"/>
</dbReference>
<dbReference type="HOGENOM" id="CLU_008658_3_0_1"/>
<dbReference type="InParanoid" id="A3GFA2"/>
<dbReference type="OMA" id="FPPHYAE"/>
<dbReference type="OrthoDB" id="10256289at2759"/>
<dbReference type="Proteomes" id="UP000002258">
    <property type="component" value="Chromosome 1"/>
</dbReference>
<dbReference type="GO" id="GO:0030127">
    <property type="term" value="C:COPII vesicle coat"/>
    <property type="evidence" value="ECO:0007669"/>
    <property type="project" value="EnsemblFungi"/>
</dbReference>
<dbReference type="GO" id="GO:0070971">
    <property type="term" value="C:endoplasmic reticulum exit site"/>
    <property type="evidence" value="ECO:0007669"/>
    <property type="project" value="TreeGrafter"/>
</dbReference>
<dbReference type="GO" id="GO:0005789">
    <property type="term" value="C:endoplasmic reticulum membrane"/>
    <property type="evidence" value="ECO:0007669"/>
    <property type="project" value="UniProtKB-SubCell"/>
</dbReference>
<dbReference type="GO" id="GO:0000139">
    <property type="term" value="C:Golgi membrane"/>
    <property type="evidence" value="ECO:0007669"/>
    <property type="project" value="UniProtKB-SubCell"/>
</dbReference>
<dbReference type="GO" id="GO:0005096">
    <property type="term" value="F:GTPase activator activity"/>
    <property type="evidence" value="ECO:0007669"/>
    <property type="project" value="EnsemblFungi"/>
</dbReference>
<dbReference type="GO" id="GO:0008270">
    <property type="term" value="F:zinc ion binding"/>
    <property type="evidence" value="ECO:0007669"/>
    <property type="project" value="InterPro"/>
</dbReference>
<dbReference type="GO" id="GO:0090110">
    <property type="term" value="P:COPII-coated vesicle cargo loading"/>
    <property type="evidence" value="ECO:0007669"/>
    <property type="project" value="EnsemblFungi"/>
</dbReference>
<dbReference type="GO" id="GO:0006886">
    <property type="term" value="P:intracellular protein transport"/>
    <property type="evidence" value="ECO:0007669"/>
    <property type="project" value="EnsemblFungi"/>
</dbReference>
<dbReference type="GO" id="GO:1902953">
    <property type="term" value="P:positive regulation of ER to Golgi vesicle-mediated transport"/>
    <property type="evidence" value="ECO:0007669"/>
    <property type="project" value="EnsemblFungi"/>
</dbReference>
<dbReference type="GO" id="GO:0070863">
    <property type="term" value="P:positive regulation of protein exit from endoplasmic reticulum"/>
    <property type="evidence" value="ECO:0007669"/>
    <property type="project" value="EnsemblFungi"/>
</dbReference>
<dbReference type="GO" id="GO:0003400">
    <property type="term" value="P:regulation of COPII vesicle coating"/>
    <property type="evidence" value="ECO:0007669"/>
    <property type="project" value="EnsemblFungi"/>
</dbReference>
<dbReference type="GO" id="GO:0061709">
    <property type="term" value="P:reticulophagy"/>
    <property type="evidence" value="ECO:0007669"/>
    <property type="project" value="EnsemblFungi"/>
</dbReference>
<dbReference type="CDD" id="cd11287">
    <property type="entry name" value="Sec23_C"/>
    <property type="match status" value="1"/>
</dbReference>
<dbReference type="FunFam" id="1.20.120.730:FF:000005">
    <property type="entry name" value="Protein transport protein SEC23"/>
    <property type="match status" value="1"/>
</dbReference>
<dbReference type="FunFam" id="2.30.30.380:FF:000001">
    <property type="entry name" value="Protein transport protein SEC23"/>
    <property type="match status" value="1"/>
</dbReference>
<dbReference type="FunFam" id="3.40.20.10:FF:000006">
    <property type="entry name" value="Protein transport protein SEC23"/>
    <property type="match status" value="1"/>
</dbReference>
<dbReference type="FunFam" id="3.40.50.410:FF:000008">
    <property type="entry name" value="Protein transport protein SEC23"/>
    <property type="match status" value="1"/>
</dbReference>
<dbReference type="Gene3D" id="2.60.40.1670">
    <property type="entry name" value="beta-sandwich domain of Sec23/24"/>
    <property type="match status" value="1"/>
</dbReference>
<dbReference type="Gene3D" id="1.20.120.730">
    <property type="entry name" value="Sec23/Sec24 helical domain"/>
    <property type="match status" value="1"/>
</dbReference>
<dbReference type="Gene3D" id="3.40.20.10">
    <property type="entry name" value="Severin"/>
    <property type="match status" value="1"/>
</dbReference>
<dbReference type="Gene3D" id="3.40.50.410">
    <property type="entry name" value="von Willebrand factor, type A domain"/>
    <property type="match status" value="1"/>
</dbReference>
<dbReference type="Gene3D" id="2.30.30.380">
    <property type="entry name" value="Zn-finger domain of Sec23/24"/>
    <property type="match status" value="1"/>
</dbReference>
<dbReference type="InterPro" id="IPR029006">
    <property type="entry name" value="ADF-H/Gelsolin-like_dom_sf"/>
</dbReference>
<dbReference type="InterPro" id="IPR007123">
    <property type="entry name" value="Gelsolin-like_dom"/>
</dbReference>
<dbReference type="InterPro" id="IPR036180">
    <property type="entry name" value="Gelsolin-like_dom_sf"/>
</dbReference>
<dbReference type="InterPro" id="IPR037364">
    <property type="entry name" value="Sec23"/>
</dbReference>
<dbReference type="InterPro" id="IPR006900">
    <property type="entry name" value="Sec23/24_helical_dom"/>
</dbReference>
<dbReference type="InterPro" id="IPR036175">
    <property type="entry name" value="Sec23/24_helical_dom_sf"/>
</dbReference>
<dbReference type="InterPro" id="IPR006896">
    <property type="entry name" value="Sec23/24_trunk_dom"/>
</dbReference>
<dbReference type="InterPro" id="IPR012990">
    <property type="entry name" value="Sec23_24_beta_S"/>
</dbReference>
<dbReference type="InterPro" id="IPR037550">
    <property type="entry name" value="Sec23_C"/>
</dbReference>
<dbReference type="InterPro" id="IPR036465">
    <property type="entry name" value="vWFA_dom_sf"/>
</dbReference>
<dbReference type="InterPro" id="IPR006895">
    <property type="entry name" value="Znf_Sec23_Sec24"/>
</dbReference>
<dbReference type="InterPro" id="IPR036174">
    <property type="entry name" value="Znf_Sec23_Sec24_sf"/>
</dbReference>
<dbReference type="PANTHER" id="PTHR11141">
    <property type="entry name" value="PROTEIN TRANSPORT PROTEIN SEC23"/>
    <property type="match status" value="1"/>
</dbReference>
<dbReference type="PANTHER" id="PTHR11141:SF0">
    <property type="entry name" value="PROTEIN TRANSPORT PROTEIN SEC23"/>
    <property type="match status" value="1"/>
</dbReference>
<dbReference type="Pfam" id="PF00626">
    <property type="entry name" value="Gelsolin"/>
    <property type="match status" value="1"/>
</dbReference>
<dbReference type="Pfam" id="PF08033">
    <property type="entry name" value="Sec23_BS"/>
    <property type="match status" value="1"/>
</dbReference>
<dbReference type="Pfam" id="PF04815">
    <property type="entry name" value="Sec23_helical"/>
    <property type="match status" value="1"/>
</dbReference>
<dbReference type="Pfam" id="PF04811">
    <property type="entry name" value="Sec23_trunk"/>
    <property type="match status" value="1"/>
</dbReference>
<dbReference type="Pfam" id="PF04810">
    <property type="entry name" value="zf-Sec23_Sec24"/>
    <property type="match status" value="1"/>
</dbReference>
<dbReference type="SUPFAM" id="SSF81995">
    <property type="entry name" value="beta-sandwich domain of Sec23/24"/>
    <property type="match status" value="1"/>
</dbReference>
<dbReference type="SUPFAM" id="SSF82754">
    <property type="entry name" value="C-terminal, gelsolin-like domain of Sec23/24"/>
    <property type="match status" value="1"/>
</dbReference>
<dbReference type="SUPFAM" id="SSF81811">
    <property type="entry name" value="Helical domain of Sec23/24"/>
    <property type="match status" value="1"/>
</dbReference>
<dbReference type="SUPFAM" id="SSF53300">
    <property type="entry name" value="vWA-like"/>
    <property type="match status" value="1"/>
</dbReference>
<dbReference type="SUPFAM" id="SSF82919">
    <property type="entry name" value="Zn-finger domain of Sec23/24"/>
    <property type="match status" value="1"/>
</dbReference>
<evidence type="ECO:0000250" key="1"/>
<evidence type="ECO:0000305" key="2"/>
<comment type="function">
    <text evidence="1">Component of the coat protein complex II (COPII) which promotes the formation of transport vesicles from the endoplasmic reticulum (ER). The coat has two main functions, the physical deformation of the endoplasmic reticulum membrane into vesicles and the selection of cargo molecules (By similarity).</text>
</comment>
<comment type="subunit">
    <text evidence="1">The COPII coat is composed of at least 5 proteins: the SEC23/24 complex, the SEC13/31 complex, and the protein SAR1.</text>
</comment>
<comment type="subcellular location">
    <subcellularLocation>
        <location evidence="1">Cytoplasm</location>
    </subcellularLocation>
    <subcellularLocation>
        <location evidence="1">Cytoplasmic vesicle</location>
        <location evidence="1">COPII-coated vesicle membrane</location>
        <topology evidence="1">Peripheral membrane protein</topology>
        <orientation evidence="1">Cytoplasmic side</orientation>
    </subcellularLocation>
    <subcellularLocation>
        <location evidence="1">Endoplasmic reticulum membrane</location>
        <topology evidence="1">Peripheral membrane protein</topology>
        <orientation evidence="1">Cytoplasmic side</orientation>
    </subcellularLocation>
    <subcellularLocation>
        <location evidence="1">Golgi apparatus membrane</location>
        <topology evidence="1">Peripheral membrane protein</topology>
        <orientation evidence="1">Cytoplasmic side</orientation>
    </subcellularLocation>
</comment>
<comment type="similarity">
    <text evidence="2">Belongs to the SEC23/SEC24 family. SEC23 subfamily.</text>
</comment>
<organism>
    <name type="scientific">Scheffersomyces stipitis (strain ATCC 58785 / CBS 6054 / NBRC 10063 / NRRL Y-11545)</name>
    <name type="common">Yeast</name>
    <name type="synonym">Pichia stipitis</name>
    <dbReference type="NCBI Taxonomy" id="322104"/>
    <lineage>
        <taxon>Eukaryota</taxon>
        <taxon>Fungi</taxon>
        <taxon>Dikarya</taxon>
        <taxon>Ascomycota</taxon>
        <taxon>Saccharomycotina</taxon>
        <taxon>Pichiomycetes</taxon>
        <taxon>Debaryomycetaceae</taxon>
        <taxon>Scheffersomyces</taxon>
    </lineage>
</organism>
<name>SEC23_PICST</name>
<proteinExistence type="inferred from homology"/>
<protein>
    <recommendedName>
        <fullName>Protein transport protein SEC23</fullName>
    </recommendedName>
</protein>
<keyword id="KW-0963">Cytoplasm</keyword>
<keyword id="KW-0968">Cytoplasmic vesicle</keyword>
<keyword id="KW-0256">Endoplasmic reticulum</keyword>
<keyword id="KW-0931">ER-Golgi transport</keyword>
<keyword id="KW-0333">Golgi apparatus</keyword>
<keyword id="KW-0472">Membrane</keyword>
<keyword id="KW-0479">Metal-binding</keyword>
<keyword id="KW-0653">Protein transport</keyword>
<keyword id="KW-1185">Reference proteome</keyword>
<keyword id="KW-0813">Transport</keyword>
<keyword id="KW-0862">Zinc</keyword>
<accession>A3GFA2</accession>
<feature type="chain" id="PRO_0000295470" description="Protein transport protein SEC23">
    <location>
        <begin position="1"/>
        <end position="749"/>
    </location>
</feature>
<feature type="binding site" evidence="1">
    <location>
        <position position="56"/>
    </location>
    <ligand>
        <name>Zn(2+)</name>
        <dbReference type="ChEBI" id="CHEBI:29105"/>
    </ligand>
</feature>
<feature type="binding site" evidence="1">
    <location>
        <position position="61"/>
    </location>
    <ligand>
        <name>Zn(2+)</name>
        <dbReference type="ChEBI" id="CHEBI:29105"/>
    </ligand>
</feature>
<feature type="binding site" evidence="1">
    <location>
        <position position="79"/>
    </location>
    <ligand>
        <name>Zn(2+)</name>
        <dbReference type="ChEBI" id="CHEBI:29105"/>
    </ligand>
</feature>
<feature type="binding site" evidence="1">
    <location>
        <position position="82"/>
    </location>
    <ligand>
        <name>Zn(2+)</name>
        <dbReference type="ChEBI" id="CHEBI:29105"/>
    </ligand>
</feature>
<sequence length="749" mass="84016">MNFEEAEDINGIRFAWNALPSTKVEAGKVVVPTGVIYTPLKQREDLPVAVYDPIFCSNQNCKSILNPYCTIDPSGFWRCPLCSYRNPLPAHYQGVTPENLPLELQPGSSTIEYITARPVQNPPIFFLLIDLCQDEDNLAALKETLIVSLSLLPPNALIGLITYGTMVQVHDLGSEKISKSYIFRGDKEYTEKQISDMLNRPTSTPQGQLPQFANSLTRFFLPVEDVEFQLTSILENLGKDPWTVANGDRPLRSTGSALNVAANLLGSTFPGFGARIMLFSAGPGTLSPGLIVGPQLKEPIRSHSDIDKDNAKHFKKAVKFYDSIAAKMVKNAHTVDIFAGCYDQIGMLEMKNLCNLTGGTLLLSDAFTTSIFKQSFLRLFNKDHEGYLLMGFNGTFDVKTSKELKISGLIGHASSMNVKTQNVSENELGIGGTSQYRLCSVSPQHSYAVFFDVVNTQSLPQNAQSYTQFITHYQHASGTYRIRVTTVSNFLTSDEQTLTNSFDQEAAAVLMSRVTLFKSEQDDGADVLRWIDRMLIRLCQKFADYRKDQEESFRLGPQFQLYPQFIYYLRRSQFLQVFNNSPDETAFYRHVLLTEDTNNSLIMIQPTLTSFSLDSEPEAVLLDSVSIKDDKILLLDTFFHILIFHGKTIAQWRKAGYQNQPEYENFKLLLEEPKQEAAELLVDRYPLPRFIDTEEGGSQARFLYSKLNPSITYNSSEFATNNGAIVLTDDVSLQVFMGHLQKLVVSGSS</sequence>
<gene>
    <name type="primary">SEC23</name>
    <name type="ORF">PICST_80516</name>
</gene>
<reference key="1">
    <citation type="journal article" date="2007" name="Nat. Biotechnol.">
        <title>Genome sequence of the lignocellulose-bioconverting and xylose-fermenting yeast Pichia stipitis.</title>
        <authorList>
            <person name="Jeffries T.W."/>
            <person name="Grigoriev I.V."/>
            <person name="Grimwood J."/>
            <person name="Laplaza J.M."/>
            <person name="Aerts A."/>
            <person name="Salamov A."/>
            <person name="Schmutz J."/>
            <person name="Lindquist E."/>
            <person name="Dehal P."/>
            <person name="Shapiro H."/>
            <person name="Jin Y.-S."/>
            <person name="Passoth V."/>
            <person name="Richardson P.M."/>
        </authorList>
    </citation>
    <scope>NUCLEOTIDE SEQUENCE [LARGE SCALE GENOMIC DNA]</scope>
    <source>
        <strain>ATCC 58785 / CBS 6054 / NBRC 10063 / NRRL Y-11545</strain>
    </source>
</reference>